<gene>
    <name evidence="6 9" type="primary">Casp8</name>
</gene>
<keyword id="KW-0053">Apoptosis</keyword>
<keyword id="KW-0963">Cytoplasm</keyword>
<keyword id="KW-0378">Hydrolase</keyword>
<keyword id="KW-0539">Nucleus</keyword>
<keyword id="KW-0597">Phosphoprotein</keyword>
<keyword id="KW-0645">Protease</keyword>
<keyword id="KW-1185">Reference proteome</keyword>
<keyword id="KW-0677">Repeat</keyword>
<keyword id="KW-0788">Thiol protease</keyword>
<keyword id="KW-0865">Zymogen</keyword>
<evidence type="ECO:0000250" key="1">
    <source>
        <dbReference type="UniProtKB" id="O89110"/>
    </source>
</evidence>
<evidence type="ECO:0000250" key="2">
    <source>
        <dbReference type="UniProtKB" id="Q14790"/>
    </source>
</evidence>
<evidence type="ECO:0000255" key="3">
    <source>
        <dbReference type="PROSITE-ProRule" id="PRU00065"/>
    </source>
</evidence>
<evidence type="ECO:0000269" key="4">
    <source>
    </source>
</evidence>
<evidence type="ECO:0000269" key="5">
    <source>
    </source>
</evidence>
<evidence type="ECO:0000303" key="6">
    <source>
    </source>
</evidence>
<evidence type="ECO:0000303" key="7">
    <source ref="2"/>
</evidence>
<evidence type="ECO:0000305" key="8"/>
<evidence type="ECO:0000312" key="9">
    <source>
        <dbReference type="RGD" id="620945"/>
    </source>
</evidence>
<name>CASP8_RAT</name>
<dbReference type="EC" id="3.4.22.61" evidence="1"/>
<dbReference type="EMBL" id="AF279308">
    <property type="protein sequence ID" value="AAF87778.1"/>
    <property type="molecule type" value="mRNA"/>
</dbReference>
<dbReference type="EMBL" id="AF288372">
    <property type="protein sequence ID" value="AAK83055.1"/>
    <property type="molecule type" value="mRNA"/>
</dbReference>
<dbReference type="EMBL" id="AABR06060567">
    <property type="status" value="NOT_ANNOTATED_CDS"/>
    <property type="molecule type" value="Genomic_DNA"/>
</dbReference>
<dbReference type="EMBL" id="AABR06060568">
    <property type="status" value="NOT_ANNOTATED_CDS"/>
    <property type="molecule type" value="Genomic_DNA"/>
</dbReference>
<dbReference type="EMBL" id="CH473965">
    <property type="protein sequence ID" value="EDL98978.1"/>
    <property type="molecule type" value="Genomic_DNA"/>
</dbReference>
<dbReference type="EMBL" id="CH473965">
    <property type="protein sequence ID" value="EDL98979.1"/>
    <property type="molecule type" value="Genomic_DNA"/>
</dbReference>
<dbReference type="RefSeq" id="NP_071613.1">
    <property type="nucleotide sequence ID" value="NM_022277.2"/>
</dbReference>
<dbReference type="RefSeq" id="XP_006245077.1">
    <property type="nucleotide sequence ID" value="XM_006245015.5"/>
</dbReference>
<dbReference type="RefSeq" id="XP_038940092.1">
    <property type="nucleotide sequence ID" value="XM_039084164.2"/>
</dbReference>
<dbReference type="SMR" id="Q9JHX4"/>
<dbReference type="FunCoup" id="Q9JHX4">
    <property type="interactions" value="977"/>
</dbReference>
<dbReference type="IntAct" id="Q9JHX4">
    <property type="interactions" value="2"/>
</dbReference>
<dbReference type="STRING" id="10116.ENSRNOP00000016613"/>
<dbReference type="MEROPS" id="C14.009"/>
<dbReference type="iPTMnet" id="Q9JHX4"/>
<dbReference type="PhosphoSitePlus" id="Q9JHX4"/>
<dbReference type="PaxDb" id="10116-ENSRNOP00000016613"/>
<dbReference type="Ensembl" id="ENSRNOT00000016613.5">
    <property type="protein sequence ID" value="ENSRNOP00000016613.2"/>
    <property type="gene ID" value="ENSRNOG00000012331.7"/>
</dbReference>
<dbReference type="GeneID" id="64044"/>
<dbReference type="KEGG" id="rno:64044"/>
<dbReference type="UCSC" id="RGD:620945">
    <property type="organism name" value="rat"/>
</dbReference>
<dbReference type="AGR" id="RGD:620945"/>
<dbReference type="CTD" id="841"/>
<dbReference type="RGD" id="620945">
    <property type="gene designation" value="Casp8"/>
</dbReference>
<dbReference type="eggNOG" id="KOG3573">
    <property type="taxonomic scope" value="Eukaryota"/>
</dbReference>
<dbReference type="GeneTree" id="ENSGT00940000160319"/>
<dbReference type="HOGENOM" id="CLU_036904_4_2_1"/>
<dbReference type="InParanoid" id="Q9JHX4"/>
<dbReference type="OMA" id="WNRIEDG"/>
<dbReference type="OrthoDB" id="6114029at2759"/>
<dbReference type="PhylomeDB" id="Q9JHX4"/>
<dbReference type="TreeFam" id="TF102023"/>
<dbReference type="BRENDA" id="3.4.22.61">
    <property type="organism ID" value="5301"/>
</dbReference>
<dbReference type="Reactome" id="R-RNO-111465">
    <property type="pathway name" value="Apoptotic cleavage of cellular proteins"/>
</dbReference>
<dbReference type="Reactome" id="R-RNO-140534">
    <property type="pathway name" value="Caspase activation via Death Receptors in the presence of ligand"/>
</dbReference>
<dbReference type="Reactome" id="R-RNO-168638">
    <property type="pathway name" value="NOD1/2 Signaling Pathway"/>
</dbReference>
<dbReference type="Reactome" id="R-RNO-2562578">
    <property type="pathway name" value="TRIF-mediated programmed cell death"/>
</dbReference>
<dbReference type="Reactome" id="R-RNO-264870">
    <property type="pathway name" value="Caspase-mediated cleavage of cytoskeletal proteins"/>
</dbReference>
<dbReference type="Reactome" id="R-RNO-3371378">
    <property type="pathway name" value="Regulation by c-FLIP"/>
</dbReference>
<dbReference type="Reactome" id="R-RNO-5218900">
    <property type="pathway name" value="CASP8 activity is inhibited"/>
</dbReference>
<dbReference type="Reactome" id="R-RNO-5357905">
    <property type="pathway name" value="Regulation of TNFR1 signaling"/>
</dbReference>
<dbReference type="Reactome" id="R-RNO-5660668">
    <property type="pathway name" value="CLEC7A/inflammasome pathway"/>
</dbReference>
<dbReference type="Reactome" id="R-RNO-5675482">
    <property type="pathway name" value="Regulation of necroptotic cell death"/>
</dbReference>
<dbReference type="Reactome" id="R-RNO-69416">
    <property type="pathway name" value="Dimerization of procaspase-8"/>
</dbReference>
<dbReference type="Reactome" id="R-RNO-75108">
    <property type="pathway name" value="Activation, myristolyation of BID and translocation to mitochondria"/>
</dbReference>
<dbReference type="Reactome" id="R-RNO-75153">
    <property type="pathway name" value="Apoptotic execution phase"/>
</dbReference>
<dbReference type="Reactome" id="R-RNO-75157">
    <property type="pathway name" value="FasL/ CD95L signaling"/>
</dbReference>
<dbReference type="Reactome" id="R-RNO-75158">
    <property type="pathway name" value="TRAIL signaling"/>
</dbReference>
<dbReference type="Reactome" id="R-RNO-9758274">
    <property type="pathway name" value="Regulation of NF-kappa B signaling"/>
</dbReference>
<dbReference type="PRO" id="PR:Q9JHX4"/>
<dbReference type="Proteomes" id="UP000002494">
    <property type="component" value="Chromosome 9"/>
</dbReference>
<dbReference type="Proteomes" id="UP000234681">
    <property type="component" value="Chromosome 9"/>
</dbReference>
<dbReference type="Bgee" id="ENSRNOG00000012331">
    <property type="expression patterns" value="Expressed in thymus and 18 other cell types or tissues"/>
</dbReference>
<dbReference type="GO" id="GO:0031265">
    <property type="term" value="C:CD95 death-inducing signaling complex"/>
    <property type="evidence" value="ECO:0000314"/>
    <property type="project" value="RGD"/>
</dbReference>
<dbReference type="GO" id="GO:0044297">
    <property type="term" value="C:cell body"/>
    <property type="evidence" value="ECO:0000314"/>
    <property type="project" value="RGD"/>
</dbReference>
<dbReference type="GO" id="GO:0005737">
    <property type="term" value="C:cytoplasm"/>
    <property type="evidence" value="ECO:0000266"/>
    <property type="project" value="RGD"/>
</dbReference>
<dbReference type="GO" id="GO:0005829">
    <property type="term" value="C:cytosol"/>
    <property type="evidence" value="ECO:0000314"/>
    <property type="project" value="RGD"/>
</dbReference>
<dbReference type="GO" id="GO:0031264">
    <property type="term" value="C:death-inducing signaling complex"/>
    <property type="evidence" value="ECO:0000314"/>
    <property type="project" value="RGD"/>
</dbReference>
<dbReference type="GO" id="GO:0030027">
    <property type="term" value="C:lamellipodium"/>
    <property type="evidence" value="ECO:0000266"/>
    <property type="project" value="RGD"/>
</dbReference>
<dbReference type="GO" id="GO:0030690">
    <property type="term" value="C:Noc1p-Noc2p complex"/>
    <property type="evidence" value="ECO:0000266"/>
    <property type="project" value="RGD"/>
</dbReference>
<dbReference type="GO" id="GO:0005634">
    <property type="term" value="C:nucleus"/>
    <property type="evidence" value="ECO:0000266"/>
    <property type="project" value="RGD"/>
</dbReference>
<dbReference type="GO" id="GO:0005886">
    <property type="term" value="C:plasma membrane"/>
    <property type="evidence" value="ECO:0000266"/>
    <property type="project" value="RGD"/>
</dbReference>
<dbReference type="GO" id="GO:0032991">
    <property type="term" value="C:protein-containing complex"/>
    <property type="evidence" value="ECO:0000314"/>
    <property type="project" value="RGD"/>
</dbReference>
<dbReference type="GO" id="GO:0097342">
    <property type="term" value="C:ripoptosome"/>
    <property type="evidence" value="ECO:0000250"/>
    <property type="project" value="UniProtKB"/>
</dbReference>
<dbReference type="GO" id="GO:0008656">
    <property type="term" value="F:cysteine-type endopeptidase activator activity involved in apoptotic process"/>
    <property type="evidence" value="ECO:0000266"/>
    <property type="project" value="RGD"/>
</dbReference>
<dbReference type="GO" id="GO:0004197">
    <property type="term" value="F:cysteine-type endopeptidase activity"/>
    <property type="evidence" value="ECO:0000314"/>
    <property type="project" value="RGD"/>
</dbReference>
<dbReference type="GO" id="GO:0035877">
    <property type="term" value="F:death effector domain binding"/>
    <property type="evidence" value="ECO:0000266"/>
    <property type="project" value="RGD"/>
</dbReference>
<dbReference type="GO" id="GO:0005123">
    <property type="term" value="F:death receptor binding"/>
    <property type="evidence" value="ECO:0000353"/>
    <property type="project" value="RGD"/>
</dbReference>
<dbReference type="GO" id="GO:0004175">
    <property type="term" value="F:endopeptidase activity"/>
    <property type="evidence" value="ECO:0000266"/>
    <property type="project" value="RGD"/>
</dbReference>
<dbReference type="GO" id="GO:0042802">
    <property type="term" value="F:identical protein binding"/>
    <property type="evidence" value="ECO:0000266"/>
    <property type="project" value="RGD"/>
</dbReference>
<dbReference type="GO" id="GO:0008233">
    <property type="term" value="F:peptidase activity"/>
    <property type="evidence" value="ECO:0000266"/>
    <property type="project" value="RGD"/>
</dbReference>
<dbReference type="GO" id="GO:0044877">
    <property type="term" value="F:protein-containing complex binding"/>
    <property type="evidence" value="ECO:0000353"/>
    <property type="project" value="RGD"/>
</dbReference>
<dbReference type="GO" id="GO:0097110">
    <property type="term" value="F:scaffold protein binding"/>
    <property type="evidence" value="ECO:0000266"/>
    <property type="project" value="RGD"/>
</dbReference>
<dbReference type="GO" id="GO:0005164">
    <property type="term" value="F:tumor necrosis factor receptor binding"/>
    <property type="evidence" value="ECO:0000353"/>
    <property type="project" value="RGD"/>
</dbReference>
<dbReference type="GO" id="GO:0031625">
    <property type="term" value="F:ubiquitin protein ligase binding"/>
    <property type="evidence" value="ECO:0000266"/>
    <property type="project" value="RGD"/>
</dbReference>
<dbReference type="GO" id="GO:0001525">
    <property type="term" value="P:angiogenesis"/>
    <property type="evidence" value="ECO:0000250"/>
    <property type="project" value="UniProtKB"/>
</dbReference>
<dbReference type="GO" id="GO:0006915">
    <property type="term" value="P:apoptotic process"/>
    <property type="evidence" value="ECO:0000266"/>
    <property type="project" value="RGD"/>
</dbReference>
<dbReference type="GO" id="GO:0097190">
    <property type="term" value="P:apoptotic signaling pathway"/>
    <property type="evidence" value="ECO:0000266"/>
    <property type="project" value="RGD"/>
</dbReference>
<dbReference type="GO" id="GO:0071260">
    <property type="term" value="P:cellular response to mechanical stimulus"/>
    <property type="evidence" value="ECO:0000266"/>
    <property type="project" value="RGD"/>
</dbReference>
<dbReference type="GO" id="GO:0097194">
    <property type="term" value="P:execution phase of apoptosis"/>
    <property type="evidence" value="ECO:0000250"/>
    <property type="project" value="UniProtKB"/>
</dbReference>
<dbReference type="GO" id="GO:0097191">
    <property type="term" value="P:extrinsic apoptotic signaling pathway"/>
    <property type="evidence" value="ECO:0000250"/>
    <property type="project" value="UniProtKB"/>
</dbReference>
<dbReference type="GO" id="GO:0008625">
    <property type="term" value="P:extrinsic apoptotic signaling pathway via death domain receptors"/>
    <property type="evidence" value="ECO:0000266"/>
    <property type="project" value="RGD"/>
</dbReference>
<dbReference type="GO" id="GO:0007507">
    <property type="term" value="P:heart development"/>
    <property type="evidence" value="ECO:0000250"/>
    <property type="project" value="UniProtKB"/>
</dbReference>
<dbReference type="GO" id="GO:0097284">
    <property type="term" value="P:hepatocyte apoptotic process"/>
    <property type="evidence" value="ECO:0000266"/>
    <property type="project" value="RGD"/>
</dbReference>
<dbReference type="GO" id="GO:0030225">
    <property type="term" value="P:macrophage differentiation"/>
    <property type="evidence" value="ECO:0000266"/>
    <property type="project" value="RGD"/>
</dbReference>
<dbReference type="GO" id="GO:0070266">
    <property type="term" value="P:necroptotic process"/>
    <property type="evidence" value="ECO:0000266"/>
    <property type="project" value="RGD"/>
</dbReference>
<dbReference type="GO" id="GO:0043124">
    <property type="term" value="P:negative regulation of canonical NF-kappaB signal transduction"/>
    <property type="evidence" value="ECO:0000266"/>
    <property type="project" value="RGD"/>
</dbReference>
<dbReference type="GO" id="GO:0060546">
    <property type="term" value="P:negative regulation of necroptotic process"/>
    <property type="evidence" value="ECO:0000250"/>
    <property type="project" value="UniProtKB"/>
</dbReference>
<dbReference type="GO" id="GO:0001841">
    <property type="term" value="P:neural tube formation"/>
    <property type="evidence" value="ECO:0000266"/>
    <property type="project" value="RGD"/>
</dbReference>
<dbReference type="GO" id="GO:0043065">
    <property type="term" value="P:positive regulation of apoptotic process"/>
    <property type="evidence" value="ECO:0000250"/>
    <property type="project" value="UniProtKB"/>
</dbReference>
<dbReference type="GO" id="GO:0043123">
    <property type="term" value="P:positive regulation of canonical NF-kappaB signal transduction"/>
    <property type="evidence" value="ECO:0000266"/>
    <property type="project" value="RGD"/>
</dbReference>
<dbReference type="GO" id="GO:0030335">
    <property type="term" value="P:positive regulation of cell migration"/>
    <property type="evidence" value="ECO:0000266"/>
    <property type="project" value="RGD"/>
</dbReference>
<dbReference type="GO" id="GO:1900119">
    <property type="term" value="P:positive regulation of execution phase of apoptosis"/>
    <property type="evidence" value="ECO:0000266"/>
    <property type="project" value="RGD"/>
</dbReference>
<dbReference type="GO" id="GO:2001238">
    <property type="term" value="P:positive regulation of extrinsic apoptotic signaling pathway"/>
    <property type="evidence" value="ECO:0000266"/>
    <property type="project" value="RGD"/>
</dbReference>
<dbReference type="GO" id="GO:0032731">
    <property type="term" value="P:positive regulation of interleukin-1 beta production"/>
    <property type="evidence" value="ECO:0000266"/>
    <property type="project" value="RGD"/>
</dbReference>
<dbReference type="GO" id="GO:0045651">
    <property type="term" value="P:positive regulation of macrophage differentiation"/>
    <property type="evidence" value="ECO:0000266"/>
    <property type="project" value="RGD"/>
</dbReference>
<dbReference type="GO" id="GO:0043525">
    <property type="term" value="P:positive regulation of neuron apoptotic process"/>
    <property type="evidence" value="ECO:0000315"/>
    <property type="project" value="RGD"/>
</dbReference>
<dbReference type="GO" id="GO:0045862">
    <property type="term" value="P:positive regulation of proteolysis"/>
    <property type="evidence" value="ECO:0000266"/>
    <property type="project" value="RGD"/>
</dbReference>
<dbReference type="GO" id="GO:0051604">
    <property type="term" value="P:protein maturation"/>
    <property type="evidence" value="ECO:0000266"/>
    <property type="project" value="RGD"/>
</dbReference>
<dbReference type="GO" id="GO:0016485">
    <property type="term" value="P:protein processing"/>
    <property type="evidence" value="ECO:0000314"/>
    <property type="project" value="RGD"/>
</dbReference>
<dbReference type="GO" id="GO:0006508">
    <property type="term" value="P:proteolysis"/>
    <property type="evidence" value="ECO:0000266"/>
    <property type="project" value="RGD"/>
</dbReference>
<dbReference type="GO" id="GO:0051603">
    <property type="term" value="P:proteolysis involved in protein catabolic process"/>
    <property type="evidence" value="ECO:0000250"/>
    <property type="project" value="UniProtKB"/>
</dbReference>
<dbReference type="GO" id="GO:0070269">
    <property type="term" value="P:pyroptotic inflammatory response"/>
    <property type="evidence" value="ECO:0000250"/>
    <property type="project" value="UniProtKB"/>
</dbReference>
<dbReference type="GO" id="GO:2001233">
    <property type="term" value="P:regulation of apoptotic signaling pathway"/>
    <property type="evidence" value="ECO:0000266"/>
    <property type="project" value="RGD"/>
</dbReference>
<dbReference type="GO" id="GO:0001817">
    <property type="term" value="P:regulation of cytokine production"/>
    <property type="evidence" value="ECO:0000250"/>
    <property type="project" value="UniProtKB"/>
</dbReference>
<dbReference type="GO" id="GO:0045088">
    <property type="term" value="P:regulation of innate immune response"/>
    <property type="evidence" value="ECO:0000250"/>
    <property type="project" value="UniProtKB"/>
</dbReference>
<dbReference type="GO" id="GO:0070243">
    <property type="term" value="P:regulation of thymocyte apoptotic process"/>
    <property type="evidence" value="ECO:0000266"/>
    <property type="project" value="RGD"/>
</dbReference>
<dbReference type="GO" id="GO:0072347">
    <property type="term" value="P:response to anesthetic"/>
    <property type="evidence" value="ECO:0000270"/>
    <property type="project" value="RGD"/>
</dbReference>
<dbReference type="GO" id="GO:0032025">
    <property type="term" value="P:response to cobalt ion"/>
    <property type="evidence" value="ECO:0000270"/>
    <property type="project" value="RGD"/>
</dbReference>
<dbReference type="GO" id="GO:0032355">
    <property type="term" value="P:response to estradiol"/>
    <property type="evidence" value="ECO:0000270"/>
    <property type="project" value="RGD"/>
</dbReference>
<dbReference type="GO" id="GO:0045471">
    <property type="term" value="P:response to ethanol"/>
    <property type="evidence" value="ECO:0000314"/>
    <property type="project" value="RGD"/>
</dbReference>
<dbReference type="GO" id="GO:0032496">
    <property type="term" value="P:response to lipopolysaccharide"/>
    <property type="evidence" value="ECO:0000270"/>
    <property type="project" value="RGD"/>
</dbReference>
<dbReference type="GO" id="GO:0034612">
    <property type="term" value="P:response to tumor necrosis factor"/>
    <property type="evidence" value="ECO:0000266"/>
    <property type="project" value="RGD"/>
</dbReference>
<dbReference type="GO" id="GO:0097264">
    <property type="term" value="P:self proteolysis"/>
    <property type="evidence" value="ECO:0000250"/>
    <property type="project" value="UniProtKB"/>
</dbReference>
<dbReference type="GO" id="GO:0036462">
    <property type="term" value="P:TRAIL-activated apoptotic signaling pathway"/>
    <property type="evidence" value="ECO:0000266"/>
    <property type="project" value="RGD"/>
</dbReference>
<dbReference type="CDD" id="cd00032">
    <property type="entry name" value="CASc"/>
    <property type="match status" value="1"/>
</dbReference>
<dbReference type="CDD" id="cd08333">
    <property type="entry name" value="DED_Caspase_8_r1"/>
    <property type="match status" value="1"/>
</dbReference>
<dbReference type="FunFam" id="1.10.533.10:FF:000016">
    <property type="entry name" value="CASP8 and FADD-like apoptosis regulator"/>
    <property type="match status" value="1"/>
</dbReference>
<dbReference type="FunFam" id="3.40.50.1460:FF:000008">
    <property type="entry name" value="caspase-8 isoform X1"/>
    <property type="match status" value="1"/>
</dbReference>
<dbReference type="Gene3D" id="3.40.50.1460">
    <property type="match status" value="1"/>
</dbReference>
<dbReference type="Gene3D" id="1.10.533.10">
    <property type="entry name" value="Death Domain, Fas"/>
    <property type="match status" value="2"/>
</dbReference>
<dbReference type="InterPro" id="IPR033170">
    <property type="entry name" value="Caspase-8_DED1"/>
</dbReference>
<dbReference type="InterPro" id="IPR029030">
    <property type="entry name" value="Caspase-like_dom_sf"/>
</dbReference>
<dbReference type="InterPro" id="IPR033139">
    <property type="entry name" value="Caspase_cys_AS"/>
</dbReference>
<dbReference type="InterPro" id="IPR016129">
    <property type="entry name" value="Caspase_his_AS"/>
</dbReference>
<dbReference type="InterPro" id="IPR011029">
    <property type="entry name" value="DEATH-like_dom_sf"/>
</dbReference>
<dbReference type="InterPro" id="IPR001875">
    <property type="entry name" value="DED_dom"/>
</dbReference>
<dbReference type="InterPro" id="IPR011600">
    <property type="entry name" value="Pept_C14_caspase"/>
</dbReference>
<dbReference type="InterPro" id="IPR002138">
    <property type="entry name" value="Pept_C14_p10"/>
</dbReference>
<dbReference type="InterPro" id="IPR001309">
    <property type="entry name" value="Pept_C14_p20"/>
</dbReference>
<dbReference type="InterPro" id="IPR015917">
    <property type="entry name" value="Pept_C14A"/>
</dbReference>
<dbReference type="PANTHER" id="PTHR48169:SF7">
    <property type="entry name" value="CASPASE 10"/>
    <property type="match status" value="1"/>
</dbReference>
<dbReference type="PANTHER" id="PTHR48169">
    <property type="entry name" value="DED DOMAIN-CONTAINING PROTEIN"/>
    <property type="match status" value="1"/>
</dbReference>
<dbReference type="Pfam" id="PF01335">
    <property type="entry name" value="DED"/>
    <property type="match status" value="2"/>
</dbReference>
<dbReference type="Pfam" id="PF00656">
    <property type="entry name" value="Peptidase_C14"/>
    <property type="match status" value="1"/>
</dbReference>
<dbReference type="PRINTS" id="PR00376">
    <property type="entry name" value="IL1BCENZYME"/>
</dbReference>
<dbReference type="SMART" id="SM00115">
    <property type="entry name" value="CASc"/>
    <property type="match status" value="1"/>
</dbReference>
<dbReference type="SMART" id="SM00031">
    <property type="entry name" value="DED"/>
    <property type="match status" value="2"/>
</dbReference>
<dbReference type="SUPFAM" id="SSF52129">
    <property type="entry name" value="Caspase-like"/>
    <property type="match status" value="1"/>
</dbReference>
<dbReference type="SUPFAM" id="SSF47986">
    <property type="entry name" value="DEATH domain"/>
    <property type="match status" value="2"/>
</dbReference>
<dbReference type="PROSITE" id="PS01122">
    <property type="entry name" value="CASPASE_CYS"/>
    <property type="match status" value="1"/>
</dbReference>
<dbReference type="PROSITE" id="PS01121">
    <property type="entry name" value="CASPASE_HIS"/>
    <property type="match status" value="1"/>
</dbReference>
<dbReference type="PROSITE" id="PS50207">
    <property type="entry name" value="CASPASE_P10"/>
    <property type="match status" value="1"/>
</dbReference>
<dbReference type="PROSITE" id="PS50208">
    <property type="entry name" value="CASPASE_P20"/>
    <property type="match status" value="1"/>
</dbReference>
<dbReference type="PROSITE" id="PS50168">
    <property type="entry name" value="DED"/>
    <property type="match status" value="2"/>
</dbReference>
<proteinExistence type="evidence at protein level"/>
<accession>Q9JHX4</accession>
<comment type="function">
    <text evidence="1 2 4">Thiol protease that plays a key role in programmed cell death by acting as a molecular switch for apoptosis, necroptosis and pyroptosis, and is required to prevent tissue damage during embryonic development and adulthood (By similarity). Initiator protease that induces extrinsic apoptosis by mediating cleavage and activation of effector caspases responsible for FAS/CD95-mediated and TNFRSF1A-induced cell death (PubMed:10197541). Cleaves and activates effector caspases CASP3, CASP4, CASP6, CASP7, CASP9 and CASP10 (By similarity). Binding to the adapter molecule FADD recruits it to either receptor FAS/CD95 or TNFRSF1A (PubMed:10197541). The resulting aggregate called the death-inducing signaling complex (DISC) performs CASP8 proteolytic activation (By similarity). The active dimeric enzyme is then liberated from the DISC and free to activate downstream apoptotic proteases (By similarity). Proteolytic fragments of the N-terminal propeptide (termed CAP3, CAP5 and CAP6) are likely retained in the DISC (By similarity). In addition to extrinsic apoptosis, also acts as a negative regulator of necroptosis: acts by cleaving RIPK1 at 'Asp-325', which is crucial to inhibit RIPK1 kinase activity, limiting TNF-induced apoptosis, necroptosis and inflammatory response (By similarity). Also able to initiate pyroptosis by mediating cleavage and activation of gasdermin-C and -D (GSDMC and GSDMD, respectively): gasdermin cleavage promotes release of the N-terminal moiety that binds to membranes and forms pores, triggering pyroptosis (By similarity). Initiates pyroptosis following inactivation of MAP3K7/TAK1 (By similarity). Also acts as a regulator of innate immunity by mediating cleavage and inactivation of N4BP1 downstream of TLR3 or TLR4, thereby promoting cytokine production (By similarity). May participate in the Granzyme B (GZMB) cell death pathways (By similarity). Cleaves PARP1 and PARP2 (By similarity).</text>
</comment>
<comment type="catalytic activity">
    <reaction evidence="1">
        <text>Strict requirement for Asp at position P1 and has a preferred cleavage sequence of (Leu/Asp/Val)-Glu-Thr-Asp-|-(Gly/Ser/Ala).</text>
        <dbReference type="EC" id="3.4.22.61"/>
    </reaction>
</comment>
<comment type="activity regulation">
    <text evidence="1">CASP8 activity is restricted by RIPK1.</text>
</comment>
<comment type="subunit">
    <text evidence="1 2 5">Heterotetramer that consists of two anti-parallel arranged heterodimers, each one formed by a 18 kDa (p18) and a 10 kDa (p10) subunit (By similarity). Component of the death-induced signaling complex (DISC) composed of cell surface receptor FAS/CD95 or TNFRSF1A, adapter protein FADD and the CASP8 protease; recruitment of CASP8 to the complex is required for processing of CASP8 into the p18 and p10 subunits (By similarity). Component of the AIM2 PANoptosome complex, a multiprotein complex that drives inflammatory cell death (PANoptosis) (By similarity). Interacts with CFLAR and PEA15 (By similarity). Interacts with RFFL and RNF34; negatively regulate CASP8 through proteasomal degradation (By similarity). Interacts with TNFAIP8L2 (By similarity). Interacts with CASP8AP2 (By similarity). Interacts with NOL3; decreases CASP8 activity in a mitochondria localization- and phosphorylation-dependent manner and this interaction is dissociated by calcium (PubMed:15383280). Interacts with UBR2 (By similarity). Interacts with RIPK1 (By similarity). Interacts with stimulated TNFRSF10B; this interaction is followed by CASP8 proteolytic cleavage and activation (By similarity).</text>
</comment>
<comment type="interaction">
    <interactant intactId="EBI-4326675">
        <id>Q9JHX4</id>
    </interactant>
    <interactant intactId="EBI-4326723">
        <id>Q8R2E7</id>
        <label>Fadd</label>
    </interactant>
    <organismsDiffer>false</organismsDiffer>
    <experiments>2</experiments>
</comment>
<comment type="subcellular location">
    <subcellularLocation>
        <location evidence="4">Cytoplasm</location>
    </subcellularLocation>
    <subcellularLocation>
        <location evidence="4">Nucleus</location>
    </subcellularLocation>
</comment>
<comment type="PTM">
    <text evidence="2">Generation of the subunits requires association with the death-inducing signaling complex (DISC), whereas additional processing is likely due to the autocatalytic activity of the activated protease. GZMB and CASP10 can be involved in these processing events (By similarity).</text>
</comment>
<comment type="PTM">
    <text evidence="2">Phosphorylation on Ser-389 during mitosis by CDK1 inhibits activation by proteolysis and prevents apoptosis. This phosphorylation occurs in cancer cell lines, as well as in primary breast tissues and lymphocytes (By similarity).</text>
</comment>
<comment type="similarity">
    <text evidence="8">Belongs to the peptidase C14A family.</text>
</comment>
<reference key="1">
    <citation type="submission" date="2000-06" db="EMBL/GenBank/DDBJ databases">
        <authorList>
            <person name="Itoh T."/>
            <person name="Itoh A."/>
            <person name="Pleasure D."/>
        </authorList>
    </citation>
    <scope>NUCLEOTIDE SEQUENCE [MRNA]</scope>
    <source>
        <strain>Sprague-Dawley</strain>
    </source>
</reference>
<reference key="2">
    <citation type="submission" date="2000-07" db="EMBL/GenBank/DDBJ databases">
        <title>Molecular cloning and characterization of rat caspase-8: Its implication in delayed neuronal cell death after ischemia.</title>
        <authorList>
            <person name="Cao G."/>
            <person name="Graham S.H."/>
            <person name="Chen D."/>
            <person name="Chen J."/>
        </authorList>
    </citation>
    <scope>NUCLEOTIDE SEQUENCE [MRNA]</scope>
    <source>
        <strain>Sprague-Dawley</strain>
        <tissue>Cerebellum</tissue>
    </source>
</reference>
<reference key="3">
    <citation type="journal article" date="2004" name="Nature">
        <title>Genome sequence of the Brown Norway rat yields insights into mammalian evolution.</title>
        <authorList>
            <person name="Gibbs R.A."/>
            <person name="Weinstock G.M."/>
            <person name="Metzker M.L."/>
            <person name="Muzny D.M."/>
            <person name="Sodergren E.J."/>
            <person name="Scherer S."/>
            <person name="Scott G."/>
            <person name="Steffen D."/>
            <person name="Worley K.C."/>
            <person name="Burch P.E."/>
            <person name="Okwuonu G."/>
            <person name="Hines S."/>
            <person name="Lewis L."/>
            <person name="Deramo C."/>
            <person name="Delgado O."/>
            <person name="Dugan-Rocha S."/>
            <person name="Miner G."/>
            <person name="Morgan M."/>
            <person name="Hawes A."/>
            <person name="Gill R."/>
            <person name="Holt R.A."/>
            <person name="Adams M.D."/>
            <person name="Amanatides P.G."/>
            <person name="Baden-Tillson H."/>
            <person name="Barnstead M."/>
            <person name="Chin S."/>
            <person name="Evans C.A."/>
            <person name="Ferriera S."/>
            <person name="Fosler C."/>
            <person name="Glodek A."/>
            <person name="Gu Z."/>
            <person name="Jennings D."/>
            <person name="Kraft C.L."/>
            <person name="Nguyen T."/>
            <person name="Pfannkoch C.M."/>
            <person name="Sitter C."/>
            <person name="Sutton G.G."/>
            <person name="Venter J.C."/>
            <person name="Woodage T."/>
            <person name="Smith D."/>
            <person name="Lee H.-M."/>
            <person name="Gustafson E."/>
            <person name="Cahill P."/>
            <person name="Kana A."/>
            <person name="Doucette-Stamm L."/>
            <person name="Weinstock K."/>
            <person name="Fechtel K."/>
            <person name="Weiss R.B."/>
            <person name="Dunn D.M."/>
            <person name="Green E.D."/>
            <person name="Blakesley R.W."/>
            <person name="Bouffard G.G."/>
            <person name="De Jong P.J."/>
            <person name="Osoegawa K."/>
            <person name="Zhu B."/>
            <person name="Marra M."/>
            <person name="Schein J."/>
            <person name="Bosdet I."/>
            <person name="Fjell C."/>
            <person name="Jones S."/>
            <person name="Krzywinski M."/>
            <person name="Mathewson C."/>
            <person name="Siddiqui A."/>
            <person name="Wye N."/>
            <person name="McPherson J."/>
            <person name="Zhao S."/>
            <person name="Fraser C.M."/>
            <person name="Shetty J."/>
            <person name="Shatsman S."/>
            <person name="Geer K."/>
            <person name="Chen Y."/>
            <person name="Abramzon S."/>
            <person name="Nierman W.C."/>
            <person name="Havlak P.H."/>
            <person name="Chen R."/>
            <person name="Durbin K.J."/>
            <person name="Egan A."/>
            <person name="Ren Y."/>
            <person name="Song X.-Z."/>
            <person name="Li B."/>
            <person name="Liu Y."/>
            <person name="Qin X."/>
            <person name="Cawley S."/>
            <person name="Cooney A.J."/>
            <person name="D'Souza L.M."/>
            <person name="Martin K."/>
            <person name="Wu J.Q."/>
            <person name="Gonzalez-Garay M.L."/>
            <person name="Jackson A.R."/>
            <person name="Kalafus K.J."/>
            <person name="McLeod M.P."/>
            <person name="Milosavljevic A."/>
            <person name="Virk D."/>
            <person name="Volkov A."/>
            <person name="Wheeler D.A."/>
            <person name="Zhang Z."/>
            <person name="Bailey J.A."/>
            <person name="Eichler E.E."/>
            <person name="Tuzun E."/>
            <person name="Birney E."/>
            <person name="Mongin E."/>
            <person name="Ureta-Vidal A."/>
            <person name="Woodwark C."/>
            <person name="Zdobnov E."/>
            <person name="Bork P."/>
            <person name="Suyama M."/>
            <person name="Torrents D."/>
            <person name="Alexandersson M."/>
            <person name="Trask B.J."/>
            <person name="Young J.M."/>
            <person name="Huang H."/>
            <person name="Wang H."/>
            <person name="Xing H."/>
            <person name="Daniels S."/>
            <person name="Gietzen D."/>
            <person name="Schmidt J."/>
            <person name="Stevens K."/>
            <person name="Vitt U."/>
            <person name="Wingrove J."/>
            <person name="Camara F."/>
            <person name="Mar Alba M."/>
            <person name="Abril J.F."/>
            <person name="Guigo R."/>
            <person name="Smit A."/>
            <person name="Dubchak I."/>
            <person name="Rubin E.M."/>
            <person name="Couronne O."/>
            <person name="Poliakov A."/>
            <person name="Huebner N."/>
            <person name="Ganten D."/>
            <person name="Goesele C."/>
            <person name="Hummel O."/>
            <person name="Kreitler T."/>
            <person name="Lee Y.-A."/>
            <person name="Monti J."/>
            <person name="Schulz H."/>
            <person name="Zimdahl H."/>
            <person name="Himmelbauer H."/>
            <person name="Lehrach H."/>
            <person name="Jacob H.J."/>
            <person name="Bromberg S."/>
            <person name="Gullings-Handley J."/>
            <person name="Jensen-Seaman M.I."/>
            <person name="Kwitek A.E."/>
            <person name="Lazar J."/>
            <person name="Pasko D."/>
            <person name="Tonellato P.J."/>
            <person name="Twigger S."/>
            <person name="Ponting C.P."/>
            <person name="Duarte J.M."/>
            <person name="Rice S."/>
            <person name="Goodstadt L."/>
            <person name="Beatson S.A."/>
            <person name="Emes R.D."/>
            <person name="Winter E.E."/>
            <person name="Webber C."/>
            <person name="Brandt P."/>
            <person name="Nyakatura G."/>
            <person name="Adetobi M."/>
            <person name="Chiaromonte F."/>
            <person name="Elnitski L."/>
            <person name="Eswara P."/>
            <person name="Hardison R.C."/>
            <person name="Hou M."/>
            <person name="Kolbe D."/>
            <person name="Makova K."/>
            <person name="Miller W."/>
            <person name="Nekrutenko A."/>
            <person name="Riemer C."/>
            <person name="Schwartz S."/>
            <person name="Taylor J."/>
            <person name="Yang S."/>
            <person name="Zhang Y."/>
            <person name="Lindpaintner K."/>
            <person name="Andrews T.D."/>
            <person name="Caccamo M."/>
            <person name="Clamp M."/>
            <person name="Clarke L."/>
            <person name="Curwen V."/>
            <person name="Durbin R.M."/>
            <person name="Eyras E."/>
            <person name="Searle S.M."/>
            <person name="Cooper G.M."/>
            <person name="Batzoglou S."/>
            <person name="Brudno M."/>
            <person name="Sidow A."/>
            <person name="Stone E.A."/>
            <person name="Payseur B.A."/>
            <person name="Bourque G."/>
            <person name="Lopez-Otin C."/>
            <person name="Puente X.S."/>
            <person name="Chakrabarti K."/>
            <person name="Chatterji S."/>
            <person name="Dewey C."/>
            <person name="Pachter L."/>
            <person name="Bray N."/>
            <person name="Yap V.B."/>
            <person name="Caspi A."/>
            <person name="Tesler G."/>
            <person name="Pevzner P.A."/>
            <person name="Haussler D."/>
            <person name="Roskin K.M."/>
            <person name="Baertsch R."/>
            <person name="Clawson H."/>
            <person name="Furey T.S."/>
            <person name="Hinrichs A.S."/>
            <person name="Karolchik D."/>
            <person name="Kent W.J."/>
            <person name="Rosenbloom K.R."/>
            <person name="Trumbower H."/>
            <person name="Weirauch M."/>
            <person name="Cooper D.N."/>
            <person name="Stenson P.D."/>
            <person name="Ma B."/>
            <person name="Brent M."/>
            <person name="Arumugam M."/>
            <person name="Shteynberg D."/>
            <person name="Copley R.R."/>
            <person name="Taylor M.S."/>
            <person name="Riethman H."/>
            <person name="Mudunuri U."/>
            <person name="Peterson J."/>
            <person name="Guyer M."/>
            <person name="Felsenfeld A."/>
            <person name="Old S."/>
            <person name="Mockrin S."/>
            <person name="Collins F.S."/>
        </authorList>
    </citation>
    <scope>NUCLEOTIDE SEQUENCE [LARGE SCALE GENOMIC DNA]</scope>
    <source>
        <strain>Brown Norway</strain>
    </source>
</reference>
<reference key="4">
    <citation type="submission" date="2005-09" db="EMBL/GenBank/DDBJ databases">
        <authorList>
            <person name="Mural R.J."/>
            <person name="Adams M.D."/>
            <person name="Myers E.W."/>
            <person name="Smith H.O."/>
            <person name="Venter J.C."/>
        </authorList>
    </citation>
    <scope>NUCLEOTIDE SEQUENCE [LARGE SCALE GENOMIC DNA]</scope>
    <source>
        <strain>Brown Norway</strain>
    </source>
</reference>
<reference key="5">
    <citation type="journal article" date="1999" name="Neuron">
        <title>Caspase-8 is required for cell death induced by expanded polyglutamine repeats.</title>
        <authorList>
            <person name="Sanchez I."/>
            <person name="Xu C.J."/>
            <person name="Juo P."/>
            <person name="Kakizaka A."/>
            <person name="Blenis J."/>
            <person name="Yuan J."/>
        </authorList>
    </citation>
    <scope>FUNCTION</scope>
    <scope>SUBCELLULAR LOCATION</scope>
</reference>
<reference key="6">
    <citation type="journal article" date="2004" name="Mol. Cell">
        <title>Inhibition of both the extrinsic and intrinsic death pathways through nonhomotypic death-fold interactions.</title>
        <authorList>
            <person name="Nam Y.J."/>
            <person name="Mani K."/>
            <person name="Ashton A.W."/>
            <person name="Peng C.F."/>
            <person name="Krishnamurthy B."/>
            <person name="Hayakawa Y."/>
            <person name="Lee P."/>
            <person name="Korsmeyer S.J."/>
            <person name="Kitsis R.N."/>
        </authorList>
    </citation>
    <scope>INTERACTION WITH NOL3</scope>
</reference>
<reference key="7">
    <citation type="journal article" date="2012" name="Nat. Commun.">
        <title>Quantitative maps of protein phosphorylation sites across 14 different rat organs and tissues.</title>
        <authorList>
            <person name="Lundby A."/>
            <person name="Secher A."/>
            <person name="Lage K."/>
            <person name="Nordsborg N.B."/>
            <person name="Dmytriyev A."/>
            <person name="Lundby C."/>
            <person name="Olsen J.V."/>
        </authorList>
    </citation>
    <scope>IDENTIFICATION BY MASS SPECTROMETRY [LARGE SCALE ANALYSIS]</scope>
</reference>
<protein>
    <recommendedName>
        <fullName evidence="6 7">Caspase-8</fullName>
        <shortName evidence="6">CASP-8</shortName>
        <ecNumber evidence="1">3.4.22.61</ecNumber>
    </recommendedName>
    <component>
        <recommendedName>
            <fullName evidence="2">Caspase-8 subunit p18</fullName>
        </recommendedName>
    </component>
    <component>
        <recommendedName>
            <fullName evidence="2">Caspase-8 subunit p10</fullName>
        </recommendedName>
    </component>
</protein>
<feature type="propeptide" id="PRO_0000432425" evidence="2">
    <location>
        <begin position="1"/>
        <end position="218"/>
    </location>
</feature>
<feature type="chain" id="PRO_0000432426" description="Caspase-8 subunit p18" evidence="2">
    <location>
        <begin position="219"/>
        <end position="378"/>
    </location>
</feature>
<feature type="propeptide" id="PRO_0000432427" evidence="2">
    <location>
        <begin position="379"/>
        <end position="388"/>
    </location>
</feature>
<feature type="chain" id="PRO_0000432428" description="Caspase-8 subunit p10" evidence="2">
    <location>
        <begin position="389"/>
        <end position="482"/>
    </location>
</feature>
<feature type="domain" description="DED 1" evidence="3">
    <location>
        <begin position="2"/>
        <end position="80"/>
    </location>
</feature>
<feature type="domain" description="DED 2" evidence="3">
    <location>
        <begin position="100"/>
        <end position="177"/>
    </location>
</feature>
<feature type="active site" evidence="2">
    <location>
        <position position="319"/>
    </location>
</feature>
<feature type="active site" evidence="2">
    <location>
        <position position="362"/>
    </location>
</feature>
<feature type="site" description="Cleavage; by autocatalytic cleavage" evidence="2">
    <location>
        <begin position="218"/>
        <end position="219"/>
    </location>
</feature>
<feature type="site" description="Cleavage; by CASP6" evidence="2">
    <location>
        <begin position="376"/>
        <end position="377"/>
    </location>
</feature>
<feature type="site" description="Cleavage; by autocatalytic cleavage" evidence="2">
    <location>
        <begin position="388"/>
        <end position="389"/>
    </location>
</feature>
<feature type="modified residue" description="Phosphoserine" evidence="1">
    <location>
        <position position="188"/>
    </location>
</feature>
<feature type="modified residue" description="Phosphoserine" evidence="1">
    <location>
        <position position="213"/>
    </location>
</feature>
<feature type="modified residue" description="Phosphotyrosine" evidence="2">
    <location>
        <position position="336"/>
    </location>
</feature>
<feature type="modified residue" description="Phosphoserine; by CDK1" evidence="2">
    <location>
        <position position="390"/>
    </location>
</feature>
<sequence length="482" mass="55339">MDFHSCLYDIAERLGNEELAALKFLCLDHIPQKKQESINDVLVLFQRLQEEGMLEEDNLSFLKELLFHISRRDLLSRVLKSSPEEMVRELQVLGKAQVSAYRVMLFKLSEDMDKEDLKSFKFLLITEIPKCKLQDNSSLLDIFVEMEKRTILAENNLVTLKSICFRVNRSLLGRIDDYERSSTERRMSTEGGEELPVSVLDEVTIKMQDMWDSPGEQESESLNSDNVYQMKSKPRGYCLIFNNNNFSKAREDIPKLSNMRDRKGTNYDEEALSKTFKELHFEIVSFSDCTASQIHEVLVSYQSKDHKGKDCFICCILSHGDKGIVYGTDGKEASIYELTSYFTGSKCPSLAGKPKIFFIQACQGNNFQKAVPVPDETGLEQEHVLEEDSSSYKNYIPDEADFLLGMATVKNCVSYRDPTRGTWYIQSLCQSLRERCPRGEDILSILTGVNYDVSNKDNPRNMGKQMPQPIFTLRKKLFFPPN</sequence>
<organism>
    <name type="scientific">Rattus norvegicus</name>
    <name type="common">Rat</name>
    <dbReference type="NCBI Taxonomy" id="10116"/>
    <lineage>
        <taxon>Eukaryota</taxon>
        <taxon>Metazoa</taxon>
        <taxon>Chordata</taxon>
        <taxon>Craniata</taxon>
        <taxon>Vertebrata</taxon>
        <taxon>Euteleostomi</taxon>
        <taxon>Mammalia</taxon>
        <taxon>Eutheria</taxon>
        <taxon>Euarchontoglires</taxon>
        <taxon>Glires</taxon>
        <taxon>Rodentia</taxon>
        <taxon>Myomorpha</taxon>
        <taxon>Muroidea</taxon>
        <taxon>Muridae</taxon>
        <taxon>Murinae</taxon>
        <taxon>Rattus</taxon>
    </lineage>
</organism>